<protein>
    <recommendedName>
        <fullName evidence="1">Putative pterin-4-alpha-carbinolamine dehydratase</fullName>
        <shortName evidence="1">PHS</shortName>
        <ecNumber evidence="1">4.2.1.96</ecNumber>
    </recommendedName>
    <alternativeName>
        <fullName evidence="1">4-alpha-hydroxy-tetrahydropterin dehydratase</fullName>
    </alternativeName>
    <alternativeName>
        <fullName evidence="1">Pterin carbinolamine dehydratase</fullName>
        <shortName evidence="1">PCD</shortName>
    </alternativeName>
</protein>
<name>PHS_TRIEI</name>
<feature type="chain" id="PRO_1000050468" description="Putative pterin-4-alpha-carbinolamine dehydratase">
    <location>
        <begin position="1"/>
        <end position="93"/>
    </location>
</feature>
<dbReference type="EC" id="4.2.1.96" evidence="1"/>
<dbReference type="EMBL" id="CP000393">
    <property type="protein sequence ID" value="ABG50582.1"/>
    <property type="molecule type" value="Genomic_DNA"/>
</dbReference>
<dbReference type="RefSeq" id="WP_011610962.1">
    <property type="nucleotide sequence ID" value="NC_008312.1"/>
</dbReference>
<dbReference type="SMR" id="Q116J2"/>
<dbReference type="STRING" id="203124.Tery_1232"/>
<dbReference type="KEGG" id="ter:Tery_1232"/>
<dbReference type="eggNOG" id="COG2154">
    <property type="taxonomic scope" value="Bacteria"/>
</dbReference>
<dbReference type="HOGENOM" id="CLU_081974_4_0_3"/>
<dbReference type="OrthoDB" id="9794987at2"/>
<dbReference type="GO" id="GO:0008124">
    <property type="term" value="F:4-alpha-hydroxytetrahydrobiopterin dehydratase activity"/>
    <property type="evidence" value="ECO:0007669"/>
    <property type="project" value="UniProtKB-UniRule"/>
</dbReference>
<dbReference type="GO" id="GO:0006729">
    <property type="term" value="P:tetrahydrobiopterin biosynthetic process"/>
    <property type="evidence" value="ECO:0007669"/>
    <property type="project" value="InterPro"/>
</dbReference>
<dbReference type="CDD" id="cd00488">
    <property type="entry name" value="PCD_DCoH"/>
    <property type="match status" value="1"/>
</dbReference>
<dbReference type="Gene3D" id="3.30.1360.20">
    <property type="entry name" value="Transcriptional coactivator/pterin dehydratase"/>
    <property type="match status" value="1"/>
</dbReference>
<dbReference type="HAMAP" id="MF_00434">
    <property type="entry name" value="Pterin_4_alpha"/>
    <property type="match status" value="1"/>
</dbReference>
<dbReference type="InterPro" id="IPR036428">
    <property type="entry name" value="PCD_sf"/>
</dbReference>
<dbReference type="InterPro" id="IPR001533">
    <property type="entry name" value="Pterin_deHydtase"/>
</dbReference>
<dbReference type="NCBIfam" id="NF002017">
    <property type="entry name" value="PRK00823.1-2"/>
    <property type="match status" value="1"/>
</dbReference>
<dbReference type="PANTHER" id="PTHR12599">
    <property type="entry name" value="PTERIN-4-ALPHA-CARBINOLAMINE DEHYDRATASE"/>
    <property type="match status" value="1"/>
</dbReference>
<dbReference type="PANTHER" id="PTHR12599:SF0">
    <property type="entry name" value="PTERIN-4-ALPHA-CARBINOLAMINE DEHYDRATASE"/>
    <property type="match status" value="1"/>
</dbReference>
<dbReference type="Pfam" id="PF01329">
    <property type="entry name" value="Pterin_4a"/>
    <property type="match status" value="1"/>
</dbReference>
<dbReference type="SUPFAM" id="SSF55248">
    <property type="entry name" value="PCD-like"/>
    <property type="match status" value="1"/>
</dbReference>
<reference key="1">
    <citation type="journal article" date="2015" name="Proc. Natl. Acad. Sci. U.S.A.">
        <title>Trichodesmium genome maintains abundant, widespread noncoding DNA in situ, despite oligotrophic lifestyle.</title>
        <authorList>
            <person name="Walworth N."/>
            <person name="Pfreundt U."/>
            <person name="Nelson W.C."/>
            <person name="Mincer T."/>
            <person name="Heidelberg J.F."/>
            <person name="Fu F."/>
            <person name="Waterbury J.B."/>
            <person name="Glavina del Rio T."/>
            <person name="Goodwin L."/>
            <person name="Kyrpides N.C."/>
            <person name="Land M.L."/>
            <person name="Woyke T."/>
            <person name="Hutchins D.A."/>
            <person name="Hess W.R."/>
            <person name="Webb E.A."/>
        </authorList>
    </citation>
    <scope>NUCLEOTIDE SEQUENCE [LARGE SCALE GENOMIC DNA]</scope>
    <source>
        <strain>IMS101</strain>
    </source>
</reference>
<sequence>MTELLAVEEINQRISQISDWKLEGNKLKYIKTVKNFVEAINFVNKLVAPAEASQHHPDLEVSYNKVTIILTTHNSGGLTEKDFKMAKTISGLS</sequence>
<proteinExistence type="inferred from homology"/>
<accession>Q116J2</accession>
<comment type="catalytic activity">
    <reaction evidence="1">
        <text>(4aS,6R)-4a-hydroxy-L-erythro-5,6,7,8-tetrahydrobiopterin = (6R)-L-erythro-6,7-dihydrobiopterin + H2O</text>
        <dbReference type="Rhea" id="RHEA:11920"/>
        <dbReference type="ChEBI" id="CHEBI:15377"/>
        <dbReference type="ChEBI" id="CHEBI:15642"/>
        <dbReference type="ChEBI" id="CHEBI:43120"/>
        <dbReference type="EC" id="4.2.1.96"/>
    </reaction>
</comment>
<comment type="similarity">
    <text evidence="1">Belongs to the pterin-4-alpha-carbinolamine dehydratase family.</text>
</comment>
<organism>
    <name type="scientific">Trichodesmium erythraeum (strain IMS101)</name>
    <dbReference type="NCBI Taxonomy" id="203124"/>
    <lineage>
        <taxon>Bacteria</taxon>
        <taxon>Bacillati</taxon>
        <taxon>Cyanobacteriota</taxon>
        <taxon>Cyanophyceae</taxon>
        <taxon>Oscillatoriophycideae</taxon>
        <taxon>Oscillatoriales</taxon>
        <taxon>Microcoleaceae</taxon>
        <taxon>Trichodesmium</taxon>
    </lineage>
</organism>
<evidence type="ECO:0000255" key="1">
    <source>
        <dbReference type="HAMAP-Rule" id="MF_00434"/>
    </source>
</evidence>
<keyword id="KW-0456">Lyase</keyword>
<gene>
    <name type="ordered locus">Tery_1232</name>
</gene>